<name>APM1D_ORYSJ</name>
<organism>
    <name type="scientific">Oryza sativa subsp. japonica</name>
    <name type="common">Rice</name>
    <dbReference type="NCBI Taxonomy" id="39947"/>
    <lineage>
        <taxon>Eukaryota</taxon>
        <taxon>Viridiplantae</taxon>
        <taxon>Streptophyta</taxon>
        <taxon>Embryophyta</taxon>
        <taxon>Tracheophyta</taxon>
        <taxon>Spermatophyta</taxon>
        <taxon>Magnoliopsida</taxon>
        <taxon>Liliopsida</taxon>
        <taxon>Poales</taxon>
        <taxon>Poaceae</taxon>
        <taxon>BOP clade</taxon>
        <taxon>Oryzoideae</taxon>
        <taxon>Oryzeae</taxon>
        <taxon>Oryzinae</taxon>
        <taxon>Oryza</taxon>
        <taxon>Oryza sativa</taxon>
    </lineage>
</organism>
<accession>Q6K4E7</accession>
<accession>Q0J2B3</accession>
<feature type="chain" id="PRO_0000424587" description="Aminopeptidase M1-D">
    <location>
        <begin position="1"/>
        <end position="873"/>
    </location>
</feature>
<feature type="region of interest" description="Required for membrane association" evidence="1">
    <location>
        <begin position="96"/>
        <end position="203"/>
    </location>
</feature>
<feature type="short sequence motif" description="Dileucine internalization motif" evidence="2">
    <location>
        <begin position="721"/>
        <end position="722"/>
    </location>
</feature>
<feature type="active site" description="Proton acceptor" evidence="3">
    <location>
        <position position="306"/>
    </location>
</feature>
<feature type="binding site" evidence="1">
    <location>
        <position position="136"/>
    </location>
    <ligand>
        <name>substrate</name>
    </ligand>
</feature>
<feature type="binding site" evidence="1">
    <location>
        <begin position="269"/>
        <end position="273"/>
    </location>
    <ligand>
        <name>substrate</name>
    </ligand>
</feature>
<feature type="binding site" evidence="3">
    <location>
        <position position="305"/>
    </location>
    <ligand>
        <name>Zn(2+)</name>
        <dbReference type="ChEBI" id="CHEBI:29105"/>
        <note>catalytic</note>
    </ligand>
</feature>
<feature type="binding site" evidence="3">
    <location>
        <position position="309"/>
    </location>
    <ligand>
        <name>Zn(2+)</name>
        <dbReference type="ChEBI" id="CHEBI:29105"/>
        <note>catalytic</note>
    </ligand>
</feature>
<feature type="binding site" evidence="3">
    <location>
        <position position="328"/>
    </location>
    <ligand>
        <name>Zn(2+)</name>
        <dbReference type="ChEBI" id="CHEBI:29105"/>
        <note>catalytic</note>
    </ligand>
</feature>
<feature type="site" description="Transition state stabilizer" evidence="1">
    <location>
        <position position="390"/>
    </location>
</feature>
<dbReference type="EC" id="3.4.11.2"/>
<dbReference type="EMBL" id="AP005572">
    <property type="protein sequence ID" value="BAD23406.1"/>
    <property type="molecule type" value="Genomic_DNA"/>
</dbReference>
<dbReference type="EMBL" id="AP008215">
    <property type="protein sequence ID" value="BAF24902.1"/>
    <property type="status" value="ALT_SEQ"/>
    <property type="molecule type" value="Genomic_DNA"/>
</dbReference>
<dbReference type="EMBL" id="AP014965">
    <property type="status" value="NOT_ANNOTATED_CDS"/>
    <property type="molecule type" value="Genomic_DNA"/>
</dbReference>
<dbReference type="EMBL" id="AK068512">
    <property type="status" value="NOT_ANNOTATED_CDS"/>
    <property type="molecule type" value="mRNA"/>
</dbReference>
<dbReference type="RefSeq" id="XP_015611913.1">
    <property type="nucleotide sequence ID" value="XM_015756427.1"/>
</dbReference>
<dbReference type="SMR" id="Q6K4E7"/>
<dbReference type="FunCoup" id="Q6K4E7">
    <property type="interactions" value="1794"/>
</dbReference>
<dbReference type="STRING" id="39947.Q6K4E7"/>
<dbReference type="MEROPS" id="M01.A25"/>
<dbReference type="PaxDb" id="39947-Q6K4E7"/>
<dbReference type="KEGG" id="dosa:Os09g0362800"/>
<dbReference type="eggNOG" id="KOG1046">
    <property type="taxonomic scope" value="Eukaryota"/>
</dbReference>
<dbReference type="InParanoid" id="Q6K4E7"/>
<dbReference type="OrthoDB" id="10031169at2759"/>
<dbReference type="Proteomes" id="UP000000763">
    <property type="component" value="Chromosome 9"/>
</dbReference>
<dbReference type="Proteomes" id="UP000059680">
    <property type="component" value="Chromosome 9"/>
</dbReference>
<dbReference type="GO" id="GO:0005737">
    <property type="term" value="C:cytoplasm"/>
    <property type="evidence" value="ECO:0000318"/>
    <property type="project" value="GO_Central"/>
</dbReference>
<dbReference type="GO" id="GO:0005783">
    <property type="term" value="C:endoplasmic reticulum"/>
    <property type="evidence" value="ECO:0007669"/>
    <property type="project" value="UniProtKB-KW"/>
</dbReference>
<dbReference type="GO" id="GO:0005615">
    <property type="term" value="C:extracellular space"/>
    <property type="evidence" value="ECO:0000318"/>
    <property type="project" value="GO_Central"/>
</dbReference>
<dbReference type="GO" id="GO:0016020">
    <property type="term" value="C:membrane"/>
    <property type="evidence" value="ECO:0000318"/>
    <property type="project" value="GO_Central"/>
</dbReference>
<dbReference type="GO" id="GO:0016285">
    <property type="term" value="F:alanyl aminopeptidase activity"/>
    <property type="evidence" value="ECO:0007669"/>
    <property type="project" value="UniProtKB-EC"/>
</dbReference>
<dbReference type="GO" id="GO:0070006">
    <property type="term" value="F:metalloaminopeptidase activity"/>
    <property type="evidence" value="ECO:0000318"/>
    <property type="project" value="GO_Central"/>
</dbReference>
<dbReference type="GO" id="GO:0042277">
    <property type="term" value="F:peptide binding"/>
    <property type="evidence" value="ECO:0000318"/>
    <property type="project" value="GO_Central"/>
</dbReference>
<dbReference type="GO" id="GO:0008270">
    <property type="term" value="F:zinc ion binding"/>
    <property type="evidence" value="ECO:0000318"/>
    <property type="project" value="GO_Central"/>
</dbReference>
<dbReference type="GO" id="GO:0043171">
    <property type="term" value="P:peptide catabolic process"/>
    <property type="evidence" value="ECO:0000318"/>
    <property type="project" value="GO_Central"/>
</dbReference>
<dbReference type="GO" id="GO:0006508">
    <property type="term" value="P:proteolysis"/>
    <property type="evidence" value="ECO:0000318"/>
    <property type="project" value="GO_Central"/>
</dbReference>
<dbReference type="CDD" id="cd09601">
    <property type="entry name" value="M1_APN-Q_like"/>
    <property type="match status" value="1"/>
</dbReference>
<dbReference type="FunFam" id="1.10.390.10:FF:000001">
    <property type="entry name" value="Aminopeptidase"/>
    <property type="match status" value="1"/>
</dbReference>
<dbReference type="FunFam" id="1.25.50.20:FF:000002">
    <property type="entry name" value="Aminopeptidase"/>
    <property type="match status" value="1"/>
</dbReference>
<dbReference type="FunFam" id="2.60.40.1730:FF:000009">
    <property type="entry name" value="Aminopeptidase"/>
    <property type="match status" value="1"/>
</dbReference>
<dbReference type="FunFam" id="2.60.40.1910:FF:000007">
    <property type="entry name" value="Aminopeptidase"/>
    <property type="match status" value="1"/>
</dbReference>
<dbReference type="Gene3D" id="1.25.50.20">
    <property type="match status" value="1"/>
</dbReference>
<dbReference type="Gene3D" id="2.60.40.1910">
    <property type="match status" value="1"/>
</dbReference>
<dbReference type="Gene3D" id="1.10.390.10">
    <property type="entry name" value="Neutral Protease Domain 2"/>
    <property type="match status" value="1"/>
</dbReference>
<dbReference type="Gene3D" id="2.60.40.1730">
    <property type="entry name" value="tricorn interacting facor f3 domain"/>
    <property type="match status" value="1"/>
</dbReference>
<dbReference type="InterPro" id="IPR045357">
    <property type="entry name" value="Aminopeptidase_N-like_N"/>
</dbReference>
<dbReference type="InterPro" id="IPR042097">
    <property type="entry name" value="Aminopeptidase_N-like_N_sf"/>
</dbReference>
<dbReference type="InterPro" id="IPR024571">
    <property type="entry name" value="ERAP1-like_C_dom"/>
</dbReference>
<dbReference type="InterPro" id="IPR034016">
    <property type="entry name" value="M1_APN-typ"/>
</dbReference>
<dbReference type="InterPro" id="IPR001930">
    <property type="entry name" value="Peptidase_M1"/>
</dbReference>
<dbReference type="InterPro" id="IPR050344">
    <property type="entry name" value="Peptidase_M1_aminopeptidases"/>
</dbReference>
<dbReference type="InterPro" id="IPR014782">
    <property type="entry name" value="Peptidase_M1_dom"/>
</dbReference>
<dbReference type="InterPro" id="IPR027268">
    <property type="entry name" value="Peptidase_M4/M1_CTD_sf"/>
</dbReference>
<dbReference type="PANTHER" id="PTHR11533:SF203">
    <property type="entry name" value="AMINOPEPTIDASE M1-C"/>
    <property type="match status" value="1"/>
</dbReference>
<dbReference type="PANTHER" id="PTHR11533">
    <property type="entry name" value="PROTEASE M1 ZINC METALLOPROTEASE"/>
    <property type="match status" value="1"/>
</dbReference>
<dbReference type="Pfam" id="PF11838">
    <property type="entry name" value="ERAP1_C"/>
    <property type="match status" value="1"/>
</dbReference>
<dbReference type="Pfam" id="PF01433">
    <property type="entry name" value="Peptidase_M1"/>
    <property type="match status" value="1"/>
</dbReference>
<dbReference type="Pfam" id="PF17900">
    <property type="entry name" value="Peptidase_M1_N"/>
    <property type="match status" value="1"/>
</dbReference>
<dbReference type="PRINTS" id="PR00756">
    <property type="entry name" value="ALADIPTASE"/>
</dbReference>
<dbReference type="SUPFAM" id="SSF63737">
    <property type="entry name" value="Leukotriene A4 hydrolase N-terminal domain"/>
    <property type="match status" value="1"/>
</dbReference>
<dbReference type="SUPFAM" id="SSF55486">
    <property type="entry name" value="Metalloproteases ('zincins'), catalytic domain"/>
    <property type="match status" value="1"/>
</dbReference>
<dbReference type="PROSITE" id="PS00142">
    <property type="entry name" value="ZINC_PROTEASE"/>
    <property type="match status" value="1"/>
</dbReference>
<comment type="catalytic activity">
    <reaction>
        <text>Release of an N-terminal amino acid, Xaa-|-Yaa- from a peptide, amide or arylamide. Xaa is preferably Ala, but may be most amino acids including Pro (slow action). When a terminal hydrophobic residue is followed by a prolyl residue, the two may be released as an intact Xaa-Pro dipeptide.</text>
        <dbReference type="EC" id="3.4.11.2"/>
    </reaction>
</comment>
<comment type="cofactor">
    <cofactor evidence="1">
        <name>Zn(2+)</name>
        <dbReference type="ChEBI" id="CHEBI:29105"/>
    </cofactor>
    <text evidence="1">Binds 1 zinc ion per subunit.</text>
</comment>
<comment type="subunit">
    <text evidence="1">Homodimer.</text>
</comment>
<comment type="subcellular location">
    <subcellularLocation>
        <location evidence="1">Membrane</location>
        <topology evidence="1">Peripheral membrane protein</topology>
    </subcellularLocation>
    <subcellularLocation>
        <location evidence="1">Microsome membrane</location>
        <topology evidence="1">Peripheral membrane protein</topology>
    </subcellularLocation>
    <subcellularLocation>
        <location evidence="1">Cytoplasm</location>
    </subcellularLocation>
    <text>The dileucine internalization motif may be involved in intracellular sequestration.</text>
</comment>
<comment type="domain">
    <text evidence="1">Dileucine motif seems to be involved in protein-protein interactions.</text>
</comment>
<comment type="similarity">
    <text evidence="4">Belongs to the peptidase M1 family.</text>
</comment>
<comment type="sequence caution" evidence="4">
    <conflict type="miscellaneous discrepancy">
        <sequence resource="EMBL" id="AK068512"/>
    </conflict>
    <text>Intron retention.</text>
</comment>
<comment type="sequence caution" evidence="4">
    <conflict type="erroneous gene model prediction">
        <sequence resource="EMBL-CDS" id="BAF24902"/>
    </conflict>
</comment>
<gene>
    <name type="ordered locus">Os09g0362800</name>
    <name type="ordered locus">LOC_Os09g19800/LOC_Os09g19820</name>
    <name type="ORF">OJ1506_A04.11</name>
</gene>
<protein>
    <recommendedName>
        <fullName>Aminopeptidase M1-D</fullName>
        <ecNumber>3.4.11.2</ecNumber>
    </recommendedName>
    <alternativeName>
        <fullName>Alpha-aminoacylpeptide hydrolase</fullName>
    </alternativeName>
</protein>
<sequence length="873" mass="98513">MAAAAAEFRGQARLPRFAAPRRYELRLRPDLAACVFSGEASVAVDVSAPTRFLVLNAADLAVDRASIRFQGLAPAEVSVFEEDEILVLEFAGELPLGEGVLAMRFNGTLNDQMRGFYRSKYEYKGETKNMAVTQFESVDARRCFPCWDEPSFKAKFKLTLEVPSELVALSNMPIVNEKIAGPIKTVEYEESPVMSTYLVAIVVGLFDYIEGVTSEGNKVRVYTQVGKSNQGKFALDVGVKSLNLYKEFFDTPYPLPKLDMVAIPDFTNGAMENYGLVTYREIYLLFDEQSSSASTKQNVAITVAHELAHQWFGNLVTMEWWTHLWLNEGFATWMSYLAVDSFFPEWNIWTQFLDSTTSALKLDSLAESHPIEVEIHHASEIDSIFDSISYDKGASVIRMLQSYLGAERFQKALASYIKKYAYSNAKTEDLWAVLEEVSGEPVKNLMTTWTKKQGYPVIGVKLKGHDVELEQDQFLLDGSSDSGMWIVPITLGCNSHDMQKRFLLKHKFSDIKGINSQYDDQDRQNSGNFWIKLNIDETGFYRVKYDDELTTALRNALQMKKLSLMDKIGIVEDAHALSIAGKQTLSSLLHLLYACRDEDDFSVLSHINSVTSSVAKISIDATPELAGEIKQLFIKLLLPTAEKLGWDPKNSESHLDAMLRPVLLVGLVQLGHDKTISEGVRRFQIFFDDRNTSLPPDTRKAAYLSVMHNVSSTNRSGYDALLKIYRESTEVEERLNVLGILSSCQDKDIVLESLNFIFTDEVRNQDAYLVLRSVIIDARETAWSWLKENWDRITKTFAASAILSDYVKSIVTLFTSKEKEAEISQFFATRTKPGFKRALKQSLENVRISARWVDGIRGEAELAQTVHDLLIKL</sequence>
<evidence type="ECO:0000250" key="1"/>
<evidence type="ECO:0000255" key="2"/>
<evidence type="ECO:0000255" key="3">
    <source>
        <dbReference type="PROSITE-ProRule" id="PRU10095"/>
    </source>
</evidence>
<evidence type="ECO:0000305" key="4"/>
<reference key="1">
    <citation type="journal article" date="2005" name="Nature">
        <title>The map-based sequence of the rice genome.</title>
        <authorList>
            <consortium name="International rice genome sequencing project (IRGSP)"/>
        </authorList>
    </citation>
    <scope>NUCLEOTIDE SEQUENCE [LARGE SCALE GENOMIC DNA]</scope>
    <source>
        <strain>cv. Nipponbare</strain>
    </source>
</reference>
<reference key="2">
    <citation type="journal article" date="2008" name="Nucleic Acids Res.">
        <title>The rice annotation project database (RAP-DB): 2008 update.</title>
        <authorList>
            <consortium name="The rice annotation project (RAP)"/>
        </authorList>
    </citation>
    <scope>GENOME REANNOTATION</scope>
    <source>
        <strain>cv. Nipponbare</strain>
    </source>
</reference>
<reference key="3">
    <citation type="journal article" date="2013" name="Rice">
        <title>Improvement of the Oryza sativa Nipponbare reference genome using next generation sequence and optical map data.</title>
        <authorList>
            <person name="Kawahara Y."/>
            <person name="de la Bastide M."/>
            <person name="Hamilton J.P."/>
            <person name="Kanamori H."/>
            <person name="McCombie W.R."/>
            <person name="Ouyang S."/>
            <person name="Schwartz D.C."/>
            <person name="Tanaka T."/>
            <person name="Wu J."/>
            <person name="Zhou S."/>
            <person name="Childs K.L."/>
            <person name="Davidson R.M."/>
            <person name="Lin H."/>
            <person name="Quesada-Ocampo L."/>
            <person name="Vaillancourt B."/>
            <person name="Sakai H."/>
            <person name="Lee S.S."/>
            <person name="Kim J."/>
            <person name="Numa H."/>
            <person name="Itoh T."/>
            <person name="Buell C.R."/>
            <person name="Matsumoto T."/>
        </authorList>
    </citation>
    <scope>GENOME REANNOTATION</scope>
    <source>
        <strain>cv. Nipponbare</strain>
    </source>
</reference>
<reference key="4">
    <citation type="journal article" date="2003" name="Science">
        <title>Collection, mapping, and annotation of over 28,000 cDNA clones from japonica rice.</title>
        <authorList>
            <consortium name="The rice full-length cDNA consortium"/>
        </authorList>
    </citation>
    <scope>NUCLEOTIDE SEQUENCE [LARGE SCALE MRNA] OF 472-873</scope>
    <source>
        <strain>cv. Nipponbare</strain>
    </source>
</reference>
<keyword id="KW-0031">Aminopeptidase</keyword>
<keyword id="KW-0963">Cytoplasm</keyword>
<keyword id="KW-0256">Endoplasmic reticulum</keyword>
<keyword id="KW-0378">Hydrolase</keyword>
<keyword id="KW-0472">Membrane</keyword>
<keyword id="KW-0479">Metal-binding</keyword>
<keyword id="KW-0482">Metalloprotease</keyword>
<keyword id="KW-0492">Microsome</keyword>
<keyword id="KW-0645">Protease</keyword>
<keyword id="KW-1185">Reference proteome</keyword>
<keyword id="KW-0862">Zinc</keyword>
<proteinExistence type="evidence at transcript level"/>